<dbReference type="EC" id="2.8.1.-" evidence="1"/>
<dbReference type="EMBL" id="BA000003">
    <property type="protein sequence ID" value="BAB13225.1"/>
    <property type="molecule type" value="Genomic_DNA"/>
</dbReference>
<dbReference type="RefSeq" id="NP_240339.1">
    <property type="nucleotide sequence ID" value="NC_002528.1"/>
</dbReference>
<dbReference type="RefSeq" id="WP_009874483.1">
    <property type="nucleotide sequence ID" value="NC_002528.1"/>
</dbReference>
<dbReference type="SMR" id="P57598"/>
<dbReference type="STRING" id="563178.BUAP5A_525"/>
<dbReference type="EnsemblBacteria" id="BAB13225">
    <property type="protein sequence ID" value="BAB13225"/>
    <property type="gene ID" value="BAB13225"/>
</dbReference>
<dbReference type="KEGG" id="buc:BU532"/>
<dbReference type="PATRIC" id="fig|107806.10.peg.537"/>
<dbReference type="eggNOG" id="COG1553">
    <property type="taxonomic scope" value="Bacteria"/>
</dbReference>
<dbReference type="HOGENOM" id="CLU_132095_0_0_6"/>
<dbReference type="Proteomes" id="UP000001806">
    <property type="component" value="Chromosome"/>
</dbReference>
<dbReference type="GO" id="GO:1990228">
    <property type="term" value="C:sulfurtransferase complex"/>
    <property type="evidence" value="ECO:0007669"/>
    <property type="project" value="TreeGrafter"/>
</dbReference>
<dbReference type="GO" id="GO:0097163">
    <property type="term" value="F:sulfur carrier activity"/>
    <property type="evidence" value="ECO:0007669"/>
    <property type="project" value="TreeGrafter"/>
</dbReference>
<dbReference type="GO" id="GO:0016783">
    <property type="term" value="F:sulfurtransferase activity"/>
    <property type="evidence" value="ECO:0007669"/>
    <property type="project" value="UniProtKB-UniRule"/>
</dbReference>
<dbReference type="GO" id="GO:0002143">
    <property type="term" value="P:tRNA wobble position uridine thiolation"/>
    <property type="evidence" value="ECO:0007669"/>
    <property type="project" value="TreeGrafter"/>
</dbReference>
<dbReference type="FunFam" id="3.40.1260.10:FF:000001">
    <property type="entry name" value="Sulfurtransferase TusD"/>
    <property type="match status" value="1"/>
</dbReference>
<dbReference type="Gene3D" id="3.40.1260.10">
    <property type="entry name" value="DsrEFH-like"/>
    <property type="match status" value="1"/>
</dbReference>
<dbReference type="HAMAP" id="MF_00390">
    <property type="entry name" value="Thiourid_synth_D"/>
    <property type="match status" value="1"/>
</dbReference>
<dbReference type="InterPro" id="IPR027396">
    <property type="entry name" value="DsrEFH-like"/>
</dbReference>
<dbReference type="InterPro" id="IPR003787">
    <property type="entry name" value="Sulphur_relay_DsrE/F-like"/>
</dbReference>
<dbReference type="InterPro" id="IPR017463">
    <property type="entry name" value="Sulphur_relay_TusD/DsrE"/>
</dbReference>
<dbReference type="NCBIfam" id="NF001237">
    <property type="entry name" value="PRK00207.1"/>
    <property type="match status" value="1"/>
</dbReference>
<dbReference type="NCBIfam" id="TIGR03012">
    <property type="entry name" value="sulf_tusD_dsrE"/>
    <property type="match status" value="1"/>
</dbReference>
<dbReference type="PANTHER" id="PTHR34874">
    <property type="entry name" value="PROTEIN YCHN"/>
    <property type="match status" value="1"/>
</dbReference>
<dbReference type="PANTHER" id="PTHR34874:SF3">
    <property type="entry name" value="SULFURTRANSFERASE TUSD"/>
    <property type="match status" value="1"/>
</dbReference>
<dbReference type="Pfam" id="PF02635">
    <property type="entry name" value="DsrE"/>
    <property type="match status" value="1"/>
</dbReference>
<dbReference type="SUPFAM" id="SSF75169">
    <property type="entry name" value="DsrEFH-like"/>
    <property type="match status" value="1"/>
</dbReference>
<accession>P57598</accession>
<sequence>MNYTILVTGPPYGTQNSSTAFLFCQSLLKTKHILHSVFFYCDGVLNANNMTTPAIDEFNLINAWQGLNKKHQVKLYVCNSAALRRGVIEDEKLFNMNVKKGNLALSFQLSGLIELAKSIKICDRIIQF</sequence>
<gene>
    <name evidence="1" type="primary">tusD</name>
    <name type="ordered locus">BU532</name>
</gene>
<proteinExistence type="inferred from homology"/>
<organism>
    <name type="scientific">Buchnera aphidicola subsp. Acyrthosiphon pisum (strain APS)</name>
    <name type="common">Acyrthosiphon pisum symbiotic bacterium</name>
    <dbReference type="NCBI Taxonomy" id="107806"/>
    <lineage>
        <taxon>Bacteria</taxon>
        <taxon>Pseudomonadati</taxon>
        <taxon>Pseudomonadota</taxon>
        <taxon>Gammaproteobacteria</taxon>
        <taxon>Enterobacterales</taxon>
        <taxon>Erwiniaceae</taxon>
        <taxon>Buchnera</taxon>
    </lineage>
</organism>
<keyword id="KW-0963">Cytoplasm</keyword>
<keyword id="KW-1185">Reference proteome</keyword>
<keyword id="KW-0808">Transferase</keyword>
<keyword id="KW-0819">tRNA processing</keyword>
<feature type="chain" id="PRO_0000214721" description="Sulfurtransferase TusD">
    <location>
        <begin position="1"/>
        <end position="128"/>
    </location>
</feature>
<feature type="active site" description="Cysteine persulfide intermediate" evidence="1">
    <location>
        <position position="78"/>
    </location>
</feature>
<name>TUSD_BUCAI</name>
<comment type="function">
    <text evidence="1">Part of a sulfur-relay system required for 2-thiolation of 5-methylaminomethyl-2-thiouridine (mnm(5)s(2)U) at tRNA wobble positions. Accepts sulfur from TusA and transfers it in turn to TusE.</text>
</comment>
<comment type="subunit">
    <text evidence="1">Heterohexamer, formed by a dimer of trimers. The hexameric TusBCD complex contains 2 copies each of TusB, TusC and TusD. The TusBCD complex interacts with TusE.</text>
</comment>
<comment type="subcellular location">
    <subcellularLocation>
        <location evidence="1">Cytoplasm</location>
    </subcellularLocation>
</comment>
<comment type="similarity">
    <text evidence="1">Belongs to the DsrE/TusD family.</text>
</comment>
<protein>
    <recommendedName>
        <fullName evidence="1">Sulfurtransferase TusD</fullName>
        <ecNumber evidence="1">2.8.1.-</ecNumber>
    </recommendedName>
    <alternativeName>
        <fullName evidence="1">tRNA 2-thiouridine synthesizing protein D</fullName>
    </alternativeName>
</protein>
<reference key="1">
    <citation type="journal article" date="2000" name="Nature">
        <title>Genome sequence of the endocellular bacterial symbiont of aphids Buchnera sp. APS.</title>
        <authorList>
            <person name="Shigenobu S."/>
            <person name="Watanabe H."/>
            <person name="Hattori M."/>
            <person name="Sakaki Y."/>
            <person name="Ishikawa H."/>
        </authorList>
    </citation>
    <scope>NUCLEOTIDE SEQUENCE [LARGE SCALE GENOMIC DNA]</scope>
    <source>
        <strain>APS</strain>
    </source>
</reference>
<evidence type="ECO:0000255" key="1">
    <source>
        <dbReference type="HAMAP-Rule" id="MF_00390"/>
    </source>
</evidence>